<comment type="function">
    <text evidence="1">Specifically methylates the N7 position of guanine in position 527 of 16S rRNA.</text>
</comment>
<comment type="catalytic activity">
    <reaction evidence="1">
        <text>guanosine(527) in 16S rRNA + S-adenosyl-L-methionine = N(7)-methylguanosine(527) in 16S rRNA + S-adenosyl-L-homocysteine</text>
        <dbReference type="Rhea" id="RHEA:42732"/>
        <dbReference type="Rhea" id="RHEA-COMP:10209"/>
        <dbReference type="Rhea" id="RHEA-COMP:10210"/>
        <dbReference type="ChEBI" id="CHEBI:57856"/>
        <dbReference type="ChEBI" id="CHEBI:59789"/>
        <dbReference type="ChEBI" id="CHEBI:74269"/>
        <dbReference type="ChEBI" id="CHEBI:74480"/>
        <dbReference type="EC" id="2.1.1.170"/>
    </reaction>
</comment>
<comment type="subcellular location">
    <subcellularLocation>
        <location evidence="1">Cytoplasm</location>
    </subcellularLocation>
</comment>
<comment type="similarity">
    <text evidence="1">Belongs to the methyltransferase superfamily. RNA methyltransferase RsmG family.</text>
</comment>
<reference key="1">
    <citation type="journal article" date="2005" name="BMC Genomics">
        <title>Bacterial genome adaptation to niches: divergence of the potential virulence genes in three Burkholderia species of different survival strategies.</title>
        <authorList>
            <person name="Kim H.S."/>
            <person name="Schell M.A."/>
            <person name="Yu Y."/>
            <person name="Ulrich R.L."/>
            <person name="Sarria S.H."/>
            <person name="Nierman W.C."/>
            <person name="DeShazer D."/>
        </authorList>
    </citation>
    <scope>NUCLEOTIDE SEQUENCE [LARGE SCALE GENOMIC DNA]</scope>
    <source>
        <strain>ATCC 700388 / DSM 13276 / CCUG 48851 / CIP 106301 / E264</strain>
    </source>
</reference>
<accession>Q2STD8</accession>
<gene>
    <name evidence="1" type="primary">rsmG</name>
    <name type="ordered locus">BTH_I3319</name>
</gene>
<organism>
    <name type="scientific">Burkholderia thailandensis (strain ATCC 700388 / DSM 13276 / CCUG 48851 / CIP 106301 / E264)</name>
    <dbReference type="NCBI Taxonomy" id="271848"/>
    <lineage>
        <taxon>Bacteria</taxon>
        <taxon>Pseudomonadati</taxon>
        <taxon>Pseudomonadota</taxon>
        <taxon>Betaproteobacteria</taxon>
        <taxon>Burkholderiales</taxon>
        <taxon>Burkholderiaceae</taxon>
        <taxon>Burkholderia</taxon>
        <taxon>pseudomallei group</taxon>
    </lineage>
</organism>
<keyword id="KW-0963">Cytoplasm</keyword>
<keyword id="KW-0489">Methyltransferase</keyword>
<keyword id="KW-0698">rRNA processing</keyword>
<keyword id="KW-0949">S-adenosyl-L-methionine</keyword>
<keyword id="KW-0808">Transferase</keyword>
<protein>
    <recommendedName>
        <fullName evidence="1">Ribosomal RNA small subunit methyltransferase G</fullName>
        <ecNumber evidence="1">2.1.1.170</ecNumber>
    </recommendedName>
    <alternativeName>
        <fullName evidence="1">16S rRNA 7-methylguanosine methyltransferase</fullName>
        <shortName evidence="1">16S rRNA m7G methyltransferase</shortName>
    </alternativeName>
</protein>
<feature type="chain" id="PRO_0000335327" description="Ribosomal RNA small subunit methyltransferase G">
    <location>
        <begin position="1"/>
        <end position="231"/>
    </location>
</feature>
<feature type="binding site" evidence="1">
    <location>
        <position position="92"/>
    </location>
    <ligand>
        <name>S-adenosyl-L-methionine</name>
        <dbReference type="ChEBI" id="CHEBI:59789"/>
    </ligand>
</feature>
<feature type="binding site" evidence="1">
    <location>
        <position position="97"/>
    </location>
    <ligand>
        <name>S-adenosyl-L-methionine</name>
        <dbReference type="ChEBI" id="CHEBI:59789"/>
    </ligand>
</feature>
<feature type="binding site" evidence="1">
    <location>
        <begin position="143"/>
        <end position="144"/>
    </location>
    <ligand>
        <name>S-adenosyl-L-methionine</name>
        <dbReference type="ChEBI" id="CHEBI:59789"/>
    </ligand>
</feature>
<feature type="binding site" evidence="1">
    <location>
        <position position="162"/>
    </location>
    <ligand>
        <name>S-adenosyl-L-methionine</name>
        <dbReference type="ChEBI" id="CHEBI:59789"/>
    </ligand>
</feature>
<proteinExistence type="inferred from homology"/>
<dbReference type="EC" id="2.1.1.170" evidence="1"/>
<dbReference type="EMBL" id="CP000086">
    <property type="protein sequence ID" value="ABC37903.1"/>
    <property type="molecule type" value="Genomic_DNA"/>
</dbReference>
<dbReference type="RefSeq" id="WP_011402670.1">
    <property type="nucleotide sequence ID" value="NZ_CP008785.1"/>
</dbReference>
<dbReference type="SMR" id="Q2STD8"/>
<dbReference type="GeneID" id="45122988"/>
<dbReference type="KEGG" id="bte:BTH_I3319"/>
<dbReference type="HOGENOM" id="CLU_065341_2_0_4"/>
<dbReference type="Proteomes" id="UP000001930">
    <property type="component" value="Chromosome I"/>
</dbReference>
<dbReference type="GO" id="GO:0005829">
    <property type="term" value="C:cytosol"/>
    <property type="evidence" value="ECO:0007669"/>
    <property type="project" value="TreeGrafter"/>
</dbReference>
<dbReference type="GO" id="GO:0070043">
    <property type="term" value="F:rRNA (guanine-N7-)-methyltransferase activity"/>
    <property type="evidence" value="ECO:0007669"/>
    <property type="project" value="UniProtKB-UniRule"/>
</dbReference>
<dbReference type="CDD" id="cd02440">
    <property type="entry name" value="AdoMet_MTases"/>
    <property type="match status" value="1"/>
</dbReference>
<dbReference type="Gene3D" id="3.40.50.150">
    <property type="entry name" value="Vaccinia Virus protein VP39"/>
    <property type="match status" value="1"/>
</dbReference>
<dbReference type="HAMAP" id="MF_00074">
    <property type="entry name" value="16SrRNA_methyltr_G"/>
    <property type="match status" value="1"/>
</dbReference>
<dbReference type="InterPro" id="IPR003682">
    <property type="entry name" value="rRNA_ssu_MeTfrase_G"/>
</dbReference>
<dbReference type="InterPro" id="IPR029063">
    <property type="entry name" value="SAM-dependent_MTases_sf"/>
</dbReference>
<dbReference type="NCBIfam" id="TIGR00138">
    <property type="entry name" value="rsmG_gidB"/>
    <property type="match status" value="1"/>
</dbReference>
<dbReference type="PANTHER" id="PTHR31760">
    <property type="entry name" value="S-ADENOSYL-L-METHIONINE-DEPENDENT METHYLTRANSFERASES SUPERFAMILY PROTEIN"/>
    <property type="match status" value="1"/>
</dbReference>
<dbReference type="PANTHER" id="PTHR31760:SF0">
    <property type="entry name" value="S-ADENOSYL-L-METHIONINE-DEPENDENT METHYLTRANSFERASES SUPERFAMILY PROTEIN"/>
    <property type="match status" value="1"/>
</dbReference>
<dbReference type="Pfam" id="PF02527">
    <property type="entry name" value="GidB"/>
    <property type="match status" value="1"/>
</dbReference>
<dbReference type="PIRSF" id="PIRSF003078">
    <property type="entry name" value="GidB"/>
    <property type="match status" value="1"/>
</dbReference>
<dbReference type="SUPFAM" id="SSF53335">
    <property type="entry name" value="S-adenosyl-L-methionine-dependent methyltransferases"/>
    <property type="match status" value="1"/>
</dbReference>
<sequence length="231" mass="24629">MTAQRRQAPIASRETLQALLSEGAEALGVALSDAQRGALLDYVALLAKWNAVYNLTAIRDPRQMLIQHILDSLSIVPHLGARGAAATALDVGSGGGLPGIVLAIALPGWQVTLNDIVQKKSAFQNQAKAELKLGNLSVVTGRVETLRPGADVQGKFDVIVSRAFADLADFVTLARHLVAPGGSIWAMKGVRPDEEIGRLPDGARVKQMIRLTVPSLDAERHLIEVELDEAI</sequence>
<name>RSMG_BURTA</name>
<evidence type="ECO:0000255" key="1">
    <source>
        <dbReference type="HAMAP-Rule" id="MF_00074"/>
    </source>
</evidence>